<comment type="function">
    <text evidence="1">Involved in protein export. Acts as a chaperone by maintaining the newly synthesized protein in an open conformation. Functions as a peptidyl-prolyl cis-trans isomerase.</text>
</comment>
<comment type="catalytic activity">
    <reaction evidence="1">
        <text>[protein]-peptidylproline (omega=180) = [protein]-peptidylproline (omega=0)</text>
        <dbReference type="Rhea" id="RHEA:16237"/>
        <dbReference type="Rhea" id="RHEA-COMP:10747"/>
        <dbReference type="Rhea" id="RHEA-COMP:10748"/>
        <dbReference type="ChEBI" id="CHEBI:83833"/>
        <dbReference type="ChEBI" id="CHEBI:83834"/>
        <dbReference type="EC" id="5.2.1.8"/>
    </reaction>
</comment>
<comment type="subcellular location">
    <subcellularLocation>
        <location>Cytoplasm</location>
    </subcellularLocation>
    <text evidence="1">About half TF is bound to the ribosome near the polypeptide exit tunnel while the other half is free in the cytoplasm.</text>
</comment>
<comment type="domain">
    <text evidence="1">Consists of 3 domains; the N-terminus binds the ribosome, the middle domain has PPIase activity, while the C-terminus has intrinsic chaperone activity on its own.</text>
</comment>
<comment type="similarity">
    <text evidence="1">Belongs to the FKBP-type PPIase family. Tig subfamily.</text>
</comment>
<feature type="chain" id="PRO_0000256629" description="Trigger factor">
    <location>
        <begin position="1"/>
        <end position="456"/>
    </location>
</feature>
<feature type="domain" description="PPIase FKBP-type" evidence="1">
    <location>
        <begin position="192"/>
        <end position="277"/>
    </location>
</feature>
<organism>
    <name type="scientific">Streptococcus pyogenes serotype M28 (strain MGAS6180)</name>
    <dbReference type="NCBI Taxonomy" id="319701"/>
    <lineage>
        <taxon>Bacteria</taxon>
        <taxon>Bacillati</taxon>
        <taxon>Bacillota</taxon>
        <taxon>Bacilli</taxon>
        <taxon>Lactobacillales</taxon>
        <taxon>Streptococcaceae</taxon>
        <taxon>Streptococcus</taxon>
    </lineage>
</organism>
<protein>
    <recommendedName>
        <fullName evidence="1">Trigger factor</fullName>
        <shortName evidence="1">TF</shortName>
        <ecNumber evidence="1">5.2.1.8</ecNumber>
    </recommendedName>
    <alternativeName>
        <fullName evidence="1">PPIase</fullName>
    </alternativeName>
</protein>
<proteinExistence type="inferred from homology"/>
<evidence type="ECO:0000255" key="1">
    <source>
        <dbReference type="HAMAP-Rule" id="MF_00303"/>
    </source>
</evidence>
<reference key="1">
    <citation type="journal article" date="2005" name="J. Infect. Dis.">
        <title>Genome sequence of a serotype M28 strain of group A Streptococcus: potential new insights into puerperal sepsis and bacterial disease specificity.</title>
        <authorList>
            <person name="Green N.M."/>
            <person name="Zhang S."/>
            <person name="Porcella S.F."/>
            <person name="Nagiec M.J."/>
            <person name="Barbian K.D."/>
            <person name="Beres S.B."/>
            <person name="Lefebvre R.B."/>
            <person name="Musser J.M."/>
        </authorList>
    </citation>
    <scope>NUCLEOTIDE SEQUENCE [LARGE SCALE GENOMIC DNA]</scope>
    <source>
        <strain>MGAS6180</strain>
    </source>
</reference>
<accession>Q48RE9</accession>
<gene>
    <name evidence="1" type="primary">tig</name>
    <name type="ordered locus">M28_Spy1601</name>
</gene>
<sequence length="456" mass="50591">MISRIKSFKNALNYDKMNCIEIILRRNDLMSTSFENKATNRGVITFTISQDKIKPALDKAFNKIKKDLNAPGFRKGHMPRPVFNQKFGEEVLYEDALNIVLPEAYEAAVTELGLDVVAQPKIDVVSMEKGKEWTLSAEVVTKPEVKLGDYKNLVVEVDASKEVSDEDVDAKIERERQNLAELIIKDGEAAQGDTVVIDFVGSVDGVEFDGGKGDNFSLELGSGQFIPGFEDQLVGAKAGDEVEVNVTFPESYQAEDLAGKAAKFMTTIHEVKTKEVPELDDELAKDIDEDVDTLEDLKVKYRKELEAAQETAYDDAVEGAAIELAVANAEIVDLPEEMIHEEVNRSVNEFMGNMQRQGISPEMYFQLTGTTQEDLHNQYSAEADKRVKTNLVIEAIAKAEGFEATDSEIEQEINDLATEYNMPADQVRSLLSADMLKHDIAMKKAVEVITSTASVK</sequence>
<name>TIG_STRPM</name>
<keyword id="KW-0131">Cell cycle</keyword>
<keyword id="KW-0132">Cell division</keyword>
<keyword id="KW-0143">Chaperone</keyword>
<keyword id="KW-0963">Cytoplasm</keyword>
<keyword id="KW-0413">Isomerase</keyword>
<keyword id="KW-0697">Rotamase</keyword>
<dbReference type="EC" id="5.2.1.8" evidence="1"/>
<dbReference type="EMBL" id="CP000056">
    <property type="protein sequence ID" value="AAX72711.1"/>
    <property type="molecule type" value="Genomic_DNA"/>
</dbReference>
<dbReference type="SMR" id="Q48RE9"/>
<dbReference type="KEGG" id="spb:M28_Spy1601"/>
<dbReference type="HOGENOM" id="CLU_033058_3_2_9"/>
<dbReference type="GO" id="GO:0005737">
    <property type="term" value="C:cytoplasm"/>
    <property type="evidence" value="ECO:0007669"/>
    <property type="project" value="UniProtKB-SubCell"/>
</dbReference>
<dbReference type="GO" id="GO:0003755">
    <property type="term" value="F:peptidyl-prolyl cis-trans isomerase activity"/>
    <property type="evidence" value="ECO:0007669"/>
    <property type="project" value="UniProtKB-UniRule"/>
</dbReference>
<dbReference type="GO" id="GO:0044183">
    <property type="term" value="F:protein folding chaperone"/>
    <property type="evidence" value="ECO:0007669"/>
    <property type="project" value="TreeGrafter"/>
</dbReference>
<dbReference type="GO" id="GO:0043022">
    <property type="term" value="F:ribosome binding"/>
    <property type="evidence" value="ECO:0007669"/>
    <property type="project" value="TreeGrafter"/>
</dbReference>
<dbReference type="GO" id="GO:0051083">
    <property type="term" value="P:'de novo' cotranslational protein folding"/>
    <property type="evidence" value="ECO:0007669"/>
    <property type="project" value="TreeGrafter"/>
</dbReference>
<dbReference type="GO" id="GO:0051301">
    <property type="term" value="P:cell division"/>
    <property type="evidence" value="ECO:0007669"/>
    <property type="project" value="UniProtKB-KW"/>
</dbReference>
<dbReference type="GO" id="GO:0061077">
    <property type="term" value="P:chaperone-mediated protein folding"/>
    <property type="evidence" value="ECO:0007669"/>
    <property type="project" value="TreeGrafter"/>
</dbReference>
<dbReference type="GO" id="GO:0015031">
    <property type="term" value="P:protein transport"/>
    <property type="evidence" value="ECO:0007669"/>
    <property type="project" value="UniProtKB-UniRule"/>
</dbReference>
<dbReference type="GO" id="GO:0043335">
    <property type="term" value="P:protein unfolding"/>
    <property type="evidence" value="ECO:0007669"/>
    <property type="project" value="TreeGrafter"/>
</dbReference>
<dbReference type="FunFam" id="3.10.50.40:FF:000001">
    <property type="entry name" value="Trigger factor"/>
    <property type="match status" value="1"/>
</dbReference>
<dbReference type="Gene3D" id="3.10.50.40">
    <property type="match status" value="1"/>
</dbReference>
<dbReference type="Gene3D" id="3.30.70.1050">
    <property type="entry name" value="Trigger factor ribosome-binding domain"/>
    <property type="match status" value="1"/>
</dbReference>
<dbReference type="Gene3D" id="1.10.3120.10">
    <property type="entry name" value="Trigger factor, C-terminal domain"/>
    <property type="match status" value="1"/>
</dbReference>
<dbReference type="HAMAP" id="MF_00303">
    <property type="entry name" value="Trigger_factor_Tig"/>
    <property type="match status" value="1"/>
</dbReference>
<dbReference type="InterPro" id="IPR046357">
    <property type="entry name" value="PPIase_dom_sf"/>
</dbReference>
<dbReference type="InterPro" id="IPR001179">
    <property type="entry name" value="PPIase_FKBP_dom"/>
</dbReference>
<dbReference type="InterPro" id="IPR005215">
    <property type="entry name" value="Trig_fac"/>
</dbReference>
<dbReference type="InterPro" id="IPR008880">
    <property type="entry name" value="Trigger_fac_C"/>
</dbReference>
<dbReference type="InterPro" id="IPR037041">
    <property type="entry name" value="Trigger_fac_C_sf"/>
</dbReference>
<dbReference type="InterPro" id="IPR008881">
    <property type="entry name" value="Trigger_fac_ribosome-bd_bac"/>
</dbReference>
<dbReference type="InterPro" id="IPR036611">
    <property type="entry name" value="Trigger_fac_ribosome-bd_sf"/>
</dbReference>
<dbReference type="InterPro" id="IPR027304">
    <property type="entry name" value="Trigger_fact/SurA_dom_sf"/>
</dbReference>
<dbReference type="NCBIfam" id="TIGR00115">
    <property type="entry name" value="tig"/>
    <property type="match status" value="1"/>
</dbReference>
<dbReference type="PANTHER" id="PTHR30560">
    <property type="entry name" value="TRIGGER FACTOR CHAPERONE AND PEPTIDYL-PROLYL CIS/TRANS ISOMERASE"/>
    <property type="match status" value="1"/>
</dbReference>
<dbReference type="PANTHER" id="PTHR30560:SF3">
    <property type="entry name" value="TRIGGER FACTOR-LIKE PROTEIN TIG, CHLOROPLASTIC"/>
    <property type="match status" value="1"/>
</dbReference>
<dbReference type="Pfam" id="PF00254">
    <property type="entry name" value="FKBP_C"/>
    <property type="match status" value="1"/>
</dbReference>
<dbReference type="Pfam" id="PF05698">
    <property type="entry name" value="Trigger_C"/>
    <property type="match status" value="1"/>
</dbReference>
<dbReference type="Pfam" id="PF05697">
    <property type="entry name" value="Trigger_N"/>
    <property type="match status" value="1"/>
</dbReference>
<dbReference type="PIRSF" id="PIRSF003095">
    <property type="entry name" value="Trigger_factor"/>
    <property type="match status" value="1"/>
</dbReference>
<dbReference type="SUPFAM" id="SSF54534">
    <property type="entry name" value="FKBP-like"/>
    <property type="match status" value="1"/>
</dbReference>
<dbReference type="SUPFAM" id="SSF109998">
    <property type="entry name" value="Triger factor/SurA peptide-binding domain-like"/>
    <property type="match status" value="1"/>
</dbReference>
<dbReference type="SUPFAM" id="SSF102735">
    <property type="entry name" value="Trigger factor ribosome-binding domain"/>
    <property type="match status" value="1"/>
</dbReference>
<dbReference type="PROSITE" id="PS50059">
    <property type="entry name" value="FKBP_PPIASE"/>
    <property type="match status" value="1"/>
</dbReference>